<evidence type="ECO:0000255" key="1">
    <source>
        <dbReference type="HAMAP-Rule" id="MF_01006"/>
    </source>
</evidence>
<keyword id="KW-0046">Antibiotic resistance</keyword>
<keyword id="KW-1003">Cell membrane</keyword>
<keyword id="KW-0133">Cell shape</keyword>
<keyword id="KW-0961">Cell wall biogenesis/degradation</keyword>
<keyword id="KW-0378">Hydrolase</keyword>
<keyword id="KW-0472">Membrane</keyword>
<keyword id="KW-0573">Peptidoglycan synthesis</keyword>
<keyword id="KW-1185">Reference proteome</keyword>
<keyword id="KW-0812">Transmembrane</keyword>
<keyword id="KW-1133">Transmembrane helix</keyword>
<reference key="1">
    <citation type="journal article" date="2006" name="Proc. Natl. Acad. Sci. U.S.A.">
        <title>The complete genome sequence of Lactobacillus bulgaricus reveals extensive and ongoing reductive evolution.</title>
        <authorList>
            <person name="van de Guchte M."/>
            <person name="Penaud S."/>
            <person name="Grimaldi C."/>
            <person name="Barbe V."/>
            <person name="Bryson K."/>
            <person name="Nicolas P."/>
            <person name="Robert C."/>
            <person name="Oztas S."/>
            <person name="Mangenot S."/>
            <person name="Couloux A."/>
            <person name="Loux V."/>
            <person name="Dervyn R."/>
            <person name="Bossy R."/>
            <person name="Bolotin A."/>
            <person name="Batto J.-M."/>
            <person name="Walunas T."/>
            <person name="Gibrat J.-F."/>
            <person name="Bessieres P."/>
            <person name="Weissenbach J."/>
            <person name="Ehrlich S.D."/>
            <person name="Maguin E."/>
        </authorList>
    </citation>
    <scope>NUCLEOTIDE SEQUENCE [LARGE SCALE GENOMIC DNA]</scope>
    <source>
        <strain>ATCC 11842 / DSM 20081 / BCRC 10696 / JCM 1002 / NBRC 13953 / NCIMB 11778 / NCTC 12712 / WDCM 00102 / Lb 14</strain>
    </source>
</reference>
<accession>Q1GB63</accession>
<name>UPPP_LACDA</name>
<protein>
    <recommendedName>
        <fullName evidence="1">Undecaprenyl-diphosphatase</fullName>
        <ecNumber evidence="1">3.6.1.27</ecNumber>
    </recommendedName>
    <alternativeName>
        <fullName evidence="1">Bacitracin resistance protein</fullName>
    </alternativeName>
    <alternativeName>
        <fullName evidence="1">Undecaprenyl pyrophosphate phosphatase</fullName>
    </alternativeName>
</protein>
<organism>
    <name type="scientific">Lactobacillus delbrueckii subsp. bulgaricus (strain ATCC 11842 / DSM 20081 / BCRC 10696 / JCM 1002 / NBRC 13953 / NCIMB 11778 / NCTC 12712 / WDCM 00102 / Lb 14)</name>
    <dbReference type="NCBI Taxonomy" id="390333"/>
    <lineage>
        <taxon>Bacteria</taxon>
        <taxon>Bacillati</taxon>
        <taxon>Bacillota</taxon>
        <taxon>Bacilli</taxon>
        <taxon>Lactobacillales</taxon>
        <taxon>Lactobacillaceae</taxon>
        <taxon>Lactobacillus</taxon>
    </lineage>
</organism>
<gene>
    <name evidence="1" type="primary">uppP</name>
    <name type="ordered locus">Ldb0587</name>
</gene>
<comment type="function">
    <text evidence="1">Catalyzes the dephosphorylation of undecaprenyl diphosphate (UPP). Confers resistance to bacitracin.</text>
</comment>
<comment type="catalytic activity">
    <reaction evidence="1">
        <text>di-trans,octa-cis-undecaprenyl diphosphate + H2O = di-trans,octa-cis-undecaprenyl phosphate + phosphate + H(+)</text>
        <dbReference type="Rhea" id="RHEA:28094"/>
        <dbReference type="ChEBI" id="CHEBI:15377"/>
        <dbReference type="ChEBI" id="CHEBI:15378"/>
        <dbReference type="ChEBI" id="CHEBI:43474"/>
        <dbReference type="ChEBI" id="CHEBI:58405"/>
        <dbReference type="ChEBI" id="CHEBI:60392"/>
        <dbReference type="EC" id="3.6.1.27"/>
    </reaction>
</comment>
<comment type="subcellular location">
    <subcellularLocation>
        <location evidence="1">Cell membrane</location>
        <topology evidence="1">Multi-pass membrane protein</topology>
    </subcellularLocation>
</comment>
<comment type="miscellaneous">
    <text>Bacitracin is thought to be involved in the inhibition of peptidoglycan synthesis by sequestering undecaprenyl diphosphate, thereby reducing the pool of lipid carrier available.</text>
</comment>
<comment type="similarity">
    <text evidence="1">Belongs to the UppP family.</text>
</comment>
<feature type="chain" id="PRO_0000250240" description="Undecaprenyl-diphosphatase">
    <location>
        <begin position="1"/>
        <end position="275"/>
    </location>
</feature>
<feature type="transmembrane region" description="Helical" evidence="1">
    <location>
        <begin position="2"/>
        <end position="22"/>
    </location>
</feature>
<feature type="transmembrane region" description="Helical" evidence="1">
    <location>
        <begin position="43"/>
        <end position="63"/>
    </location>
</feature>
<feature type="transmembrane region" description="Helical" evidence="1">
    <location>
        <begin position="83"/>
        <end position="103"/>
    </location>
</feature>
<feature type="transmembrane region" description="Helical" evidence="1">
    <location>
        <begin position="111"/>
        <end position="131"/>
    </location>
</feature>
<feature type="transmembrane region" description="Helical" evidence="1">
    <location>
        <begin position="161"/>
        <end position="181"/>
    </location>
</feature>
<feature type="transmembrane region" description="Helical" evidence="1">
    <location>
        <begin position="186"/>
        <end position="206"/>
    </location>
</feature>
<feature type="transmembrane region" description="Helical" evidence="1">
    <location>
        <begin position="225"/>
        <end position="245"/>
    </location>
</feature>
<feature type="transmembrane region" description="Helical" evidence="1">
    <location>
        <begin position="255"/>
        <end position="275"/>
    </location>
</feature>
<sequence>MLDIFKAIILGIIEGVTEFLPISSTGHLYLADYIIKLDQPTSFINMFMVVIQLGAILSVIVIYFNKLNPFAPSKSKREKGQTWQIWFKVIAAVLPSIIIGLPLNDWLEENMTSWQVISATLIIYGILFIVLENYYAKRQPSLTDLNKMSNKTALLIGCFQVLSMIPGTSRSGATILGAMLIGSSRYVATEFSFFLAIPTMFGASLLKLVKFFKAGHVFVGNQLAILLVGMVVSFIVAYLSIKFLLKYVQTHDFKPFGWYRIVLGIIVTICGLVFA</sequence>
<proteinExistence type="inferred from homology"/>
<dbReference type="EC" id="3.6.1.27" evidence="1"/>
<dbReference type="EMBL" id="CR954253">
    <property type="protein sequence ID" value="CAI97417.1"/>
    <property type="molecule type" value="Genomic_DNA"/>
</dbReference>
<dbReference type="RefSeq" id="WP_003622651.1">
    <property type="nucleotide sequence ID" value="NZ_JQAV01000001.1"/>
</dbReference>
<dbReference type="SMR" id="Q1GB63"/>
<dbReference type="STRING" id="390333.Ldb0587"/>
<dbReference type="KEGG" id="ldb:Ldb0587"/>
<dbReference type="PATRIC" id="fig|390333.13.peg.209"/>
<dbReference type="eggNOG" id="COG1968">
    <property type="taxonomic scope" value="Bacteria"/>
</dbReference>
<dbReference type="HOGENOM" id="CLU_060296_2_0_9"/>
<dbReference type="BioCyc" id="LDEL390333:LDB_RS02525-MONOMER"/>
<dbReference type="Proteomes" id="UP000001259">
    <property type="component" value="Chromosome"/>
</dbReference>
<dbReference type="GO" id="GO:0005886">
    <property type="term" value="C:plasma membrane"/>
    <property type="evidence" value="ECO:0007669"/>
    <property type="project" value="UniProtKB-SubCell"/>
</dbReference>
<dbReference type="GO" id="GO:0050380">
    <property type="term" value="F:undecaprenyl-diphosphatase activity"/>
    <property type="evidence" value="ECO:0007669"/>
    <property type="project" value="UniProtKB-UniRule"/>
</dbReference>
<dbReference type="GO" id="GO:0071555">
    <property type="term" value="P:cell wall organization"/>
    <property type="evidence" value="ECO:0007669"/>
    <property type="project" value="UniProtKB-KW"/>
</dbReference>
<dbReference type="GO" id="GO:0009252">
    <property type="term" value="P:peptidoglycan biosynthetic process"/>
    <property type="evidence" value="ECO:0007669"/>
    <property type="project" value="UniProtKB-KW"/>
</dbReference>
<dbReference type="GO" id="GO:0008360">
    <property type="term" value="P:regulation of cell shape"/>
    <property type="evidence" value="ECO:0007669"/>
    <property type="project" value="UniProtKB-KW"/>
</dbReference>
<dbReference type="GO" id="GO:0046677">
    <property type="term" value="P:response to antibiotic"/>
    <property type="evidence" value="ECO:0007669"/>
    <property type="project" value="UniProtKB-UniRule"/>
</dbReference>
<dbReference type="HAMAP" id="MF_01006">
    <property type="entry name" value="Undec_diphosphatase"/>
    <property type="match status" value="1"/>
</dbReference>
<dbReference type="InterPro" id="IPR003824">
    <property type="entry name" value="UppP"/>
</dbReference>
<dbReference type="NCBIfam" id="NF001389">
    <property type="entry name" value="PRK00281.1-2"/>
    <property type="match status" value="1"/>
</dbReference>
<dbReference type="NCBIfam" id="NF001390">
    <property type="entry name" value="PRK00281.1-4"/>
    <property type="match status" value="1"/>
</dbReference>
<dbReference type="NCBIfam" id="NF001391">
    <property type="entry name" value="PRK00281.1-5"/>
    <property type="match status" value="1"/>
</dbReference>
<dbReference type="NCBIfam" id="TIGR00753">
    <property type="entry name" value="undec_PP_bacA"/>
    <property type="match status" value="1"/>
</dbReference>
<dbReference type="PANTHER" id="PTHR30622">
    <property type="entry name" value="UNDECAPRENYL-DIPHOSPHATASE"/>
    <property type="match status" value="1"/>
</dbReference>
<dbReference type="PANTHER" id="PTHR30622:SF3">
    <property type="entry name" value="UNDECAPRENYL-DIPHOSPHATASE"/>
    <property type="match status" value="1"/>
</dbReference>
<dbReference type="Pfam" id="PF02673">
    <property type="entry name" value="BacA"/>
    <property type="match status" value="1"/>
</dbReference>